<keyword id="KW-0963">Cytoplasm</keyword>
<keyword id="KW-0227">DNA damage</keyword>
<keyword id="KW-0234">DNA repair</keyword>
<keyword id="KW-0235">DNA replication</keyword>
<keyword id="KW-0238">DNA-binding</keyword>
<keyword id="KW-0239">DNA-directed DNA polymerase</keyword>
<keyword id="KW-0460">Magnesium</keyword>
<keyword id="KW-0479">Metal-binding</keyword>
<keyword id="KW-0515">Mutator protein</keyword>
<keyword id="KW-0548">Nucleotidyltransferase</keyword>
<keyword id="KW-0808">Transferase</keyword>
<accession>P63991</accession>
<accession>Q99SZ1</accession>
<proteinExistence type="inferred from homology"/>
<evidence type="ECO:0000255" key="1">
    <source>
        <dbReference type="HAMAP-Rule" id="MF_01113"/>
    </source>
</evidence>
<protein>
    <recommendedName>
        <fullName evidence="1">DNA polymerase IV</fullName>
        <shortName evidence="1">Pol IV</shortName>
        <ecNumber evidence="1">2.7.7.7</ecNumber>
    </recommendedName>
</protein>
<reference key="1">
    <citation type="journal article" date="2001" name="Lancet">
        <title>Whole genome sequencing of meticillin-resistant Staphylococcus aureus.</title>
        <authorList>
            <person name="Kuroda M."/>
            <person name="Ohta T."/>
            <person name="Uchiyama I."/>
            <person name="Baba T."/>
            <person name="Yuzawa H."/>
            <person name="Kobayashi I."/>
            <person name="Cui L."/>
            <person name="Oguchi A."/>
            <person name="Aoki K."/>
            <person name="Nagai Y."/>
            <person name="Lian J.-Q."/>
            <person name="Ito T."/>
            <person name="Kanamori M."/>
            <person name="Matsumaru H."/>
            <person name="Maruyama A."/>
            <person name="Murakami H."/>
            <person name="Hosoyama A."/>
            <person name="Mizutani-Ui Y."/>
            <person name="Takahashi N.K."/>
            <person name="Sawano T."/>
            <person name="Inoue R."/>
            <person name="Kaito C."/>
            <person name="Sekimizu K."/>
            <person name="Hirakawa H."/>
            <person name="Kuhara S."/>
            <person name="Goto S."/>
            <person name="Yabuzaki J."/>
            <person name="Kanehisa M."/>
            <person name="Yamashita A."/>
            <person name="Oshima K."/>
            <person name="Furuya K."/>
            <person name="Yoshino C."/>
            <person name="Shiba T."/>
            <person name="Hattori M."/>
            <person name="Ogasawara N."/>
            <person name="Hayashi H."/>
            <person name="Hiramatsu K."/>
        </authorList>
    </citation>
    <scope>NUCLEOTIDE SEQUENCE [LARGE SCALE GENOMIC DNA]</scope>
    <source>
        <strain>Mu50 / ATCC 700699</strain>
    </source>
</reference>
<name>DPO4_STAAM</name>
<sequence>MTERRIIHIDMDYFFAQVEMRDNPKLKGKPVIVGGKASSRGVVSTASYEARKYGVHSAMPMSQAHKLCPNGYFVTSNFGAYRETSAQIMSIFRSYTDKVEPMSLDEAYLDITELVRPDLPASKIAQYIRKDILEQTHLTASAGVSYNKFLAKLASGMNKPDGLTVIDYQNVHDILMTLDIGDFPGVGKASKKVMHDNGIFNGRDLYEKTEFELIRLFGKRGRGLYNKARGIDHSEVKSSRVRKSVGTERTFATDVNDDEEILRKVWELSGKTAERLNKLQKSAKTVTVKIKTYQFETLSKQMSLRDSVSSEEDIYNIAYLLYNDLKDPDVPIRLIGVTVGNLEQSTYKNMTIYDFI</sequence>
<dbReference type="EC" id="2.7.7.7" evidence="1"/>
<dbReference type="EMBL" id="BA000017">
    <property type="protein sequence ID" value="BAB58057.1"/>
    <property type="molecule type" value="Genomic_DNA"/>
</dbReference>
<dbReference type="RefSeq" id="WP_000140172.1">
    <property type="nucleotide sequence ID" value="NC_002758.2"/>
</dbReference>
<dbReference type="SMR" id="P63991"/>
<dbReference type="KEGG" id="sav:SAV1895"/>
<dbReference type="HOGENOM" id="CLU_012348_1_2_9"/>
<dbReference type="PhylomeDB" id="P63991"/>
<dbReference type="Proteomes" id="UP000002481">
    <property type="component" value="Chromosome"/>
</dbReference>
<dbReference type="GO" id="GO:0005829">
    <property type="term" value="C:cytosol"/>
    <property type="evidence" value="ECO:0007669"/>
    <property type="project" value="TreeGrafter"/>
</dbReference>
<dbReference type="GO" id="GO:0003684">
    <property type="term" value="F:damaged DNA binding"/>
    <property type="evidence" value="ECO:0007669"/>
    <property type="project" value="InterPro"/>
</dbReference>
<dbReference type="GO" id="GO:0003887">
    <property type="term" value="F:DNA-directed DNA polymerase activity"/>
    <property type="evidence" value="ECO:0007669"/>
    <property type="project" value="UniProtKB-UniRule"/>
</dbReference>
<dbReference type="GO" id="GO:0000287">
    <property type="term" value="F:magnesium ion binding"/>
    <property type="evidence" value="ECO:0007669"/>
    <property type="project" value="UniProtKB-UniRule"/>
</dbReference>
<dbReference type="GO" id="GO:0006261">
    <property type="term" value="P:DNA-templated DNA replication"/>
    <property type="evidence" value="ECO:0007669"/>
    <property type="project" value="UniProtKB-UniRule"/>
</dbReference>
<dbReference type="GO" id="GO:0042276">
    <property type="term" value="P:error-prone translesion synthesis"/>
    <property type="evidence" value="ECO:0007669"/>
    <property type="project" value="TreeGrafter"/>
</dbReference>
<dbReference type="GO" id="GO:0009432">
    <property type="term" value="P:SOS response"/>
    <property type="evidence" value="ECO:0007669"/>
    <property type="project" value="TreeGrafter"/>
</dbReference>
<dbReference type="CDD" id="cd03586">
    <property type="entry name" value="PolY_Pol_IV_kappa"/>
    <property type="match status" value="1"/>
</dbReference>
<dbReference type="FunFam" id="3.30.1490.100:FF:000004">
    <property type="entry name" value="DNA polymerase IV"/>
    <property type="match status" value="1"/>
</dbReference>
<dbReference type="FunFam" id="3.40.1170.60:FF:000001">
    <property type="entry name" value="DNA polymerase IV"/>
    <property type="match status" value="1"/>
</dbReference>
<dbReference type="Gene3D" id="3.30.70.270">
    <property type="match status" value="1"/>
</dbReference>
<dbReference type="Gene3D" id="3.40.1170.60">
    <property type="match status" value="1"/>
</dbReference>
<dbReference type="Gene3D" id="1.10.150.20">
    <property type="entry name" value="5' to 3' exonuclease, C-terminal subdomain"/>
    <property type="match status" value="1"/>
</dbReference>
<dbReference type="Gene3D" id="3.30.1490.100">
    <property type="entry name" value="DNA polymerase, Y-family, little finger domain"/>
    <property type="match status" value="1"/>
</dbReference>
<dbReference type="HAMAP" id="MF_01113">
    <property type="entry name" value="DNApol_IV"/>
    <property type="match status" value="1"/>
</dbReference>
<dbReference type="InterPro" id="IPR043502">
    <property type="entry name" value="DNA/RNA_pol_sf"/>
</dbReference>
<dbReference type="InterPro" id="IPR036775">
    <property type="entry name" value="DNA_pol_Y-fam_lit_finger_sf"/>
</dbReference>
<dbReference type="InterPro" id="IPR017961">
    <property type="entry name" value="DNA_pol_Y-fam_little_finger"/>
</dbReference>
<dbReference type="InterPro" id="IPR050116">
    <property type="entry name" value="DNA_polymerase-Y"/>
</dbReference>
<dbReference type="InterPro" id="IPR022880">
    <property type="entry name" value="DNApol_IV"/>
</dbReference>
<dbReference type="InterPro" id="IPR043128">
    <property type="entry name" value="Rev_trsase/Diguanyl_cyclase"/>
</dbReference>
<dbReference type="InterPro" id="IPR001126">
    <property type="entry name" value="UmuC"/>
</dbReference>
<dbReference type="NCBIfam" id="NF002677">
    <property type="entry name" value="PRK02406.1"/>
    <property type="match status" value="1"/>
</dbReference>
<dbReference type="NCBIfam" id="NF010731">
    <property type="entry name" value="PRK14133.1"/>
    <property type="match status" value="1"/>
</dbReference>
<dbReference type="PANTHER" id="PTHR11076:SF33">
    <property type="entry name" value="DNA POLYMERASE KAPPA"/>
    <property type="match status" value="1"/>
</dbReference>
<dbReference type="PANTHER" id="PTHR11076">
    <property type="entry name" value="DNA REPAIR POLYMERASE UMUC / TRANSFERASE FAMILY MEMBER"/>
    <property type="match status" value="1"/>
</dbReference>
<dbReference type="Pfam" id="PF00817">
    <property type="entry name" value="IMS"/>
    <property type="match status" value="1"/>
</dbReference>
<dbReference type="Pfam" id="PF11799">
    <property type="entry name" value="IMS_C"/>
    <property type="match status" value="1"/>
</dbReference>
<dbReference type="SUPFAM" id="SSF56672">
    <property type="entry name" value="DNA/RNA polymerases"/>
    <property type="match status" value="1"/>
</dbReference>
<dbReference type="SUPFAM" id="SSF100879">
    <property type="entry name" value="Lesion bypass DNA polymerase (Y-family), little finger domain"/>
    <property type="match status" value="1"/>
</dbReference>
<dbReference type="PROSITE" id="PS50173">
    <property type="entry name" value="UMUC"/>
    <property type="match status" value="1"/>
</dbReference>
<feature type="chain" id="PRO_0000173944" description="DNA polymerase IV">
    <location>
        <begin position="1"/>
        <end position="356"/>
    </location>
</feature>
<feature type="domain" description="UmuC" evidence="1">
    <location>
        <begin position="6"/>
        <end position="187"/>
    </location>
</feature>
<feature type="active site" evidence="1">
    <location>
        <position position="106"/>
    </location>
</feature>
<feature type="binding site" evidence="1">
    <location>
        <position position="10"/>
    </location>
    <ligand>
        <name>Mg(2+)</name>
        <dbReference type="ChEBI" id="CHEBI:18420"/>
    </ligand>
</feature>
<feature type="binding site" evidence="1">
    <location>
        <position position="105"/>
    </location>
    <ligand>
        <name>Mg(2+)</name>
        <dbReference type="ChEBI" id="CHEBI:18420"/>
    </ligand>
</feature>
<feature type="site" description="Substrate discrimination" evidence="1">
    <location>
        <position position="15"/>
    </location>
</feature>
<comment type="function">
    <text evidence="1">Poorly processive, error-prone DNA polymerase involved in untargeted mutagenesis. Copies undamaged DNA at stalled replication forks, which arise in vivo from mismatched or misaligned primer ends. These misaligned primers can be extended by PolIV. Exhibits no 3'-5' exonuclease (proofreading) activity. May be involved in translesional synthesis, in conjunction with the beta clamp from PolIII.</text>
</comment>
<comment type="catalytic activity">
    <reaction evidence="1">
        <text>DNA(n) + a 2'-deoxyribonucleoside 5'-triphosphate = DNA(n+1) + diphosphate</text>
        <dbReference type="Rhea" id="RHEA:22508"/>
        <dbReference type="Rhea" id="RHEA-COMP:17339"/>
        <dbReference type="Rhea" id="RHEA-COMP:17340"/>
        <dbReference type="ChEBI" id="CHEBI:33019"/>
        <dbReference type="ChEBI" id="CHEBI:61560"/>
        <dbReference type="ChEBI" id="CHEBI:173112"/>
        <dbReference type="EC" id="2.7.7.7"/>
    </reaction>
</comment>
<comment type="cofactor">
    <cofactor evidence="1">
        <name>Mg(2+)</name>
        <dbReference type="ChEBI" id="CHEBI:18420"/>
    </cofactor>
    <text evidence="1">Binds 2 magnesium ions per subunit.</text>
</comment>
<comment type="subunit">
    <text evidence="1">Monomer.</text>
</comment>
<comment type="subcellular location">
    <subcellularLocation>
        <location evidence="1">Cytoplasm</location>
    </subcellularLocation>
</comment>
<comment type="similarity">
    <text evidence="1">Belongs to the DNA polymerase type-Y family.</text>
</comment>
<gene>
    <name evidence="1" type="primary">dinB</name>
    <name type="ordered locus">SAV1895</name>
</gene>
<organism>
    <name type="scientific">Staphylococcus aureus (strain Mu50 / ATCC 700699)</name>
    <dbReference type="NCBI Taxonomy" id="158878"/>
    <lineage>
        <taxon>Bacteria</taxon>
        <taxon>Bacillati</taxon>
        <taxon>Bacillota</taxon>
        <taxon>Bacilli</taxon>
        <taxon>Bacillales</taxon>
        <taxon>Staphylococcaceae</taxon>
        <taxon>Staphylococcus</taxon>
    </lineage>
</organism>